<name>ILVC_RALN1</name>
<proteinExistence type="inferred from homology"/>
<keyword id="KW-0028">Amino-acid biosynthesis</keyword>
<keyword id="KW-0100">Branched-chain amino acid biosynthesis</keyword>
<keyword id="KW-0460">Magnesium</keyword>
<keyword id="KW-0479">Metal-binding</keyword>
<keyword id="KW-0521">NADP</keyword>
<keyword id="KW-0560">Oxidoreductase</keyword>
<keyword id="KW-1185">Reference proteome</keyword>
<comment type="function">
    <text evidence="1">Involved in the biosynthesis of branched-chain amino acids (BCAA). Catalyzes an alkyl-migration followed by a ketol-acid reduction of (S)-2-acetolactate (S2AL) to yield (R)-2,3-dihydroxy-isovalerate. In the isomerase reaction, S2AL is rearranged via a Mg-dependent methyl migration to produce 3-hydroxy-3-methyl-2-ketobutyrate (HMKB). In the reductase reaction, this 2-ketoacid undergoes a metal-dependent reduction by NADPH to yield (R)-2,3-dihydroxy-isovalerate.</text>
</comment>
<comment type="catalytic activity">
    <reaction evidence="1">
        <text>(2R)-2,3-dihydroxy-3-methylbutanoate + NADP(+) = (2S)-2-acetolactate + NADPH + H(+)</text>
        <dbReference type="Rhea" id="RHEA:22068"/>
        <dbReference type="ChEBI" id="CHEBI:15378"/>
        <dbReference type="ChEBI" id="CHEBI:49072"/>
        <dbReference type="ChEBI" id="CHEBI:57783"/>
        <dbReference type="ChEBI" id="CHEBI:58349"/>
        <dbReference type="ChEBI" id="CHEBI:58476"/>
        <dbReference type="EC" id="1.1.1.86"/>
    </reaction>
</comment>
<comment type="catalytic activity">
    <reaction evidence="1">
        <text>(2R,3R)-2,3-dihydroxy-3-methylpentanoate + NADP(+) = (S)-2-ethyl-2-hydroxy-3-oxobutanoate + NADPH + H(+)</text>
        <dbReference type="Rhea" id="RHEA:13493"/>
        <dbReference type="ChEBI" id="CHEBI:15378"/>
        <dbReference type="ChEBI" id="CHEBI:49256"/>
        <dbReference type="ChEBI" id="CHEBI:49258"/>
        <dbReference type="ChEBI" id="CHEBI:57783"/>
        <dbReference type="ChEBI" id="CHEBI:58349"/>
        <dbReference type="EC" id="1.1.1.86"/>
    </reaction>
</comment>
<comment type="cofactor">
    <cofactor evidence="1">
        <name>Mg(2+)</name>
        <dbReference type="ChEBI" id="CHEBI:18420"/>
    </cofactor>
    <text evidence="1">Binds 2 magnesium ions per subunit.</text>
</comment>
<comment type="pathway">
    <text evidence="1">Amino-acid biosynthesis; L-isoleucine biosynthesis; L-isoleucine from 2-oxobutanoate: step 2/4.</text>
</comment>
<comment type="pathway">
    <text evidence="1">Amino-acid biosynthesis; L-valine biosynthesis; L-valine from pyruvate: step 2/4.</text>
</comment>
<comment type="similarity">
    <text evidence="1">Belongs to the ketol-acid reductoisomerase family.</text>
</comment>
<protein>
    <recommendedName>
        <fullName evidence="1">Ketol-acid reductoisomerase (NADP(+))</fullName>
        <shortName evidence="1">KARI</shortName>
        <ecNumber evidence="1">1.1.1.86</ecNumber>
    </recommendedName>
    <alternativeName>
        <fullName evidence="1">Acetohydroxy-acid isomeroreductase</fullName>
        <shortName evidence="1">AHIR</shortName>
    </alternativeName>
    <alternativeName>
        <fullName evidence="1">Alpha-keto-beta-hydroxylacyl reductoisomerase</fullName>
    </alternativeName>
    <alternativeName>
        <fullName evidence="1">Ketol-acid reductoisomerase type 1</fullName>
    </alternativeName>
    <alternativeName>
        <fullName evidence="1">Ketol-acid reductoisomerase type I</fullName>
    </alternativeName>
</protein>
<feature type="chain" id="PRO_0000151345" description="Ketol-acid reductoisomerase (NADP(+))">
    <location>
        <begin position="1"/>
        <end position="338"/>
    </location>
</feature>
<feature type="domain" description="KARI N-terminal Rossmann" evidence="2">
    <location>
        <begin position="1"/>
        <end position="181"/>
    </location>
</feature>
<feature type="domain" description="KARI C-terminal knotted" evidence="3">
    <location>
        <begin position="182"/>
        <end position="327"/>
    </location>
</feature>
<feature type="active site" evidence="1">
    <location>
        <position position="107"/>
    </location>
</feature>
<feature type="binding site" evidence="1">
    <location>
        <begin position="24"/>
        <end position="27"/>
    </location>
    <ligand>
        <name>NADP(+)</name>
        <dbReference type="ChEBI" id="CHEBI:58349"/>
    </ligand>
</feature>
<feature type="binding site" evidence="1">
    <location>
        <position position="47"/>
    </location>
    <ligand>
        <name>NADP(+)</name>
        <dbReference type="ChEBI" id="CHEBI:58349"/>
    </ligand>
</feature>
<feature type="binding site" evidence="1">
    <location>
        <position position="52"/>
    </location>
    <ligand>
        <name>NADP(+)</name>
        <dbReference type="ChEBI" id="CHEBI:58349"/>
    </ligand>
</feature>
<feature type="binding site" evidence="1">
    <location>
        <position position="133"/>
    </location>
    <ligand>
        <name>NADP(+)</name>
        <dbReference type="ChEBI" id="CHEBI:58349"/>
    </ligand>
</feature>
<feature type="binding site" evidence="1">
    <location>
        <position position="190"/>
    </location>
    <ligand>
        <name>Mg(2+)</name>
        <dbReference type="ChEBI" id="CHEBI:18420"/>
        <label>1</label>
    </ligand>
</feature>
<feature type="binding site" evidence="1">
    <location>
        <position position="190"/>
    </location>
    <ligand>
        <name>Mg(2+)</name>
        <dbReference type="ChEBI" id="CHEBI:18420"/>
        <label>2</label>
    </ligand>
</feature>
<feature type="binding site" evidence="1">
    <location>
        <position position="194"/>
    </location>
    <ligand>
        <name>Mg(2+)</name>
        <dbReference type="ChEBI" id="CHEBI:18420"/>
        <label>1</label>
    </ligand>
</feature>
<feature type="binding site" evidence="1">
    <location>
        <position position="226"/>
    </location>
    <ligand>
        <name>Mg(2+)</name>
        <dbReference type="ChEBI" id="CHEBI:18420"/>
        <label>2</label>
    </ligand>
</feature>
<feature type="binding site" evidence="1">
    <location>
        <position position="230"/>
    </location>
    <ligand>
        <name>Mg(2+)</name>
        <dbReference type="ChEBI" id="CHEBI:18420"/>
        <label>2</label>
    </ligand>
</feature>
<feature type="binding site" evidence="1">
    <location>
        <position position="251"/>
    </location>
    <ligand>
        <name>substrate</name>
    </ligand>
</feature>
<evidence type="ECO:0000255" key="1">
    <source>
        <dbReference type="HAMAP-Rule" id="MF_00435"/>
    </source>
</evidence>
<evidence type="ECO:0000255" key="2">
    <source>
        <dbReference type="PROSITE-ProRule" id="PRU01197"/>
    </source>
</evidence>
<evidence type="ECO:0000255" key="3">
    <source>
        <dbReference type="PROSITE-ProRule" id="PRU01198"/>
    </source>
</evidence>
<dbReference type="EC" id="1.1.1.86" evidence="1"/>
<dbReference type="EMBL" id="AL646052">
    <property type="protein sequence ID" value="CAD15782.1"/>
    <property type="molecule type" value="Genomic_DNA"/>
</dbReference>
<dbReference type="RefSeq" id="WP_011002007.1">
    <property type="nucleotide sequence ID" value="NC_003295.1"/>
</dbReference>
<dbReference type="SMR" id="Q8XXN8"/>
<dbReference type="STRING" id="267608.RSc2075"/>
<dbReference type="EnsemblBacteria" id="CAD15782">
    <property type="protein sequence ID" value="CAD15782"/>
    <property type="gene ID" value="RSc2075"/>
</dbReference>
<dbReference type="KEGG" id="rso:RSc2075"/>
<dbReference type="eggNOG" id="COG0059">
    <property type="taxonomic scope" value="Bacteria"/>
</dbReference>
<dbReference type="HOGENOM" id="CLU_033821_0_1_4"/>
<dbReference type="UniPathway" id="UPA00047">
    <property type="reaction ID" value="UER00056"/>
</dbReference>
<dbReference type="UniPathway" id="UPA00049">
    <property type="reaction ID" value="UER00060"/>
</dbReference>
<dbReference type="Proteomes" id="UP000001436">
    <property type="component" value="Chromosome"/>
</dbReference>
<dbReference type="GO" id="GO:0005829">
    <property type="term" value="C:cytosol"/>
    <property type="evidence" value="ECO:0007669"/>
    <property type="project" value="TreeGrafter"/>
</dbReference>
<dbReference type="GO" id="GO:0004455">
    <property type="term" value="F:ketol-acid reductoisomerase activity"/>
    <property type="evidence" value="ECO:0007669"/>
    <property type="project" value="UniProtKB-UniRule"/>
</dbReference>
<dbReference type="GO" id="GO:0000287">
    <property type="term" value="F:magnesium ion binding"/>
    <property type="evidence" value="ECO:0007669"/>
    <property type="project" value="UniProtKB-UniRule"/>
</dbReference>
<dbReference type="GO" id="GO:0050661">
    <property type="term" value="F:NADP binding"/>
    <property type="evidence" value="ECO:0007669"/>
    <property type="project" value="InterPro"/>
</dbReference>
<dbReference type="GO" id="GO:0009097">
    <property type="term" value="P:isoleucine biosynthetic process"/>
    <property type="evidence" value="ECO:0007669"/>
    <property type="project" value="UniProtKB-UniRule"/>
</dbReference>
<dbReference type="GO" id="GO:0009099">
    <property type="term" value="P:L-valine biosynthetic process"/>
    <property type="evidence" value="ECO:0007669"/>
    <property type="project" value="UniProtKB-UniRule"/>
</dbReference>
<dbReference type="FunFam" id="3.40.50.720:FF:000023">
    <property type="entry name" value="Ketol-acid reductoisomerase (NADP(+))"/>
    <property type="match status" value="1"/>
</dbReference>
<dbReference type="Gene3D" id="6.10.240.10">
    <property type="match status" value="1"/>
</dbReference>
<dbReference type="Gene3D" id="3.40.50.720">
    <property type="entry name" value="NAD(P)-binding Rossmann-like Domain"/>
    <property type="match status" value="1"/>
</dbReference>
<dbReference type="HAMAP" id="MF_00435">
    <property type="entry name" value="IlvC"/>
    <property type="match status" value="1"/>
</dbReference>
<dbReference type="InterPro" id="IPR008927">
    <property type="entry name" value="6-PGluconate_DH-like_C_sf"/>
</dbReference>
<dbReference type="InterPro" id="IPR013023">
    <property type="entry name" value="KARI"/>
</dbReference>
<dbReference type="InterPro" id="IPR000506">
    <property type="entry name" value="KARI_C"/>
</dbReference>
<dbReference type="InterPro" id="IPR013116">
    <property type="entry name" value="KARI_N"/>
</dbReference>
<dbReference type="InterPro" id="IPR014359">
    <property type="entry name" value="KARI_prok"/>
</dbReference>
<dbReference type="InterPro" id="IPR036291">
    <property type="entry name" value="NAD(P)-bd_dom_sf"/>
</dbReference>
<dbReference type="NCBIfam" id="TIGR00465">
    <property type="entry name" value="ilvC"/>
    <property type="match status" value="1"/>
</dbReference>
<dbReference type="NCBIfam" id="NF004017">
    <property type="entry name" value="PRK05479.1"/>
    <property type="match status" value="1"/>
</dbReference>
<dbReference type="NCBIfam" id="NF009940">
    <property type="entry name" value="PRK13403.1"/>
    <property type="match status" value="1"/>
</dbReference>
<dbReference type="PANTHER" id="PTHR21371">
    <property type="entry name" value="KETOL-ACID REDUCTOISOMERASE, MITOCHONDRIAL"/>
    <property type="match status" value="1"/>
</dbReference>
<dbReference type="PANTHER" id="PTHR21371:SF1">
    <property type="entry name" value="KETOL-ACID REDUCTOISOMERASE, MITOCHONDRIAL"/>
    <property type="match status" value="1"/>
</dbReference>
<dbReference type="Pfam" id="PF01450">
    <property type="entry name" value="KARI_C"/>
    <property type="match status" value="1"/>
</dbReference>
<dbReference type="Pfam" id="PF07991">
    <property type="entry name" value="KARI_N"/>
    <property type="match status" value="1"/>
</dbReference>
<dbReference type="PIRSF" id="PIRSF000116">
    <property type="entry name" value="IlvC_gammaproteo"/>
    <property type="match status" value="1"/>
</dbReference>
<dbReference type="SUPFAM" id="SSF48179">
    <property type="entry name" value="6-phosphogluconate dehydrogenase C-terminal domain-like"/>
    <property type="match status" value="1"/>
</dbReference>
<dbReference type="SUPFAM" id="SSF51735">
    <property type="entry name" value="NAD(P)-binding Rossmann-fold domains"/>
    <property type="match status" value="1"/>
</dbReference>
<dbReference type="PROSITE" id="PS51851">
    <property type="entry name" value="KARI_C"/>
    <property type="match status" value="1"/>
</dbReference>
<dbReference type="PROSITE" id="PS51850">
    <property type="entry name" value="KARI_N"/>
    <property type="match status" value="1"/>
</dbReference>
<gene>
    <name evidence="1" type="primary">ilvC</name>
    <name type="ordered locus">RSc2075</name>
    <name type="ORF">RS03640</name>
</gene>
<reference key="1">
    <citation type="journal article" date="2002" name="Nature">
        <title>Genome sequence of the plant pathogen Ralstonia solanacearum.</title>
        <authorList>
            <person name="Salanoubat M."/>
            <person name="Genin S."/>
            <person name="Artiguenave F."/>
            <person name="Gouzy J."/>
            <person name="Mangenot S."/>
            <person name="Arlat M."/>
            <person name="Billault A."/>
            <person name="Brottier P."/>
            <person name="Camus J.-C."/>
            <person name="Cattolico L."/>
            <person name="Chandler M."/>
            <person name="Choisne N."/>
            <person name="Claudel-Renard C."/>
            <person name="Cunnac S."/>
            <person name="Demange N."/>
            <person name="Gaspin C."/>
            <person name="Lavie M."/>
            <person name="Moisan A."/>
            <person name="Robert C."/>
            <person name="Saurin W."/>
            <person name="Schiex T."/>
            <person name="Siguier P."/>
            <person name="Thebault P."/>
            <person name="Whalen M."/>
            <person name="Wincker P."/>
            <person name="Levy M."/>
            <person name="Weissenbach J."/>
            <person name="Boucher C.A."/>
        </authorList>
    </citation>
    <scope>NUCLEOTIDE SEQUENCE [LARGE SCALE GENOMIC DNA]</scope>
    <source>
        <strain>ATCC BAA-1114 / GMI1000</strain>
    </source>
</reference>
<sequence>MKVFYDKDADLSLIKGKNVTIIGYGSQGHAHALNLNDSGVKVTVGLRKNGASWNKAVNAGLQVKEVAEAVKDADVVMILLPDEQIADVYKNEVHGNIKQGAALAFAHGFNVHYGAVIPRADLDVIMVAPKAPGHTVRGTYAQGGGVPHLIAVHQDKSGSARDIALSYATANGGGRAGIIETNFREETETDLFGEQAVLCGGTVELIKAGFETLVEAGYAPEMAYFECLHELKLIVDLIYEGGIGNMNYSISNNAEYGEYVTGPRVVTAETKQAMKQCLHDIQTGEYAKSFLLENKAGAPTLISRRRLTADHQIEQVGAKLRAMMPWIAKNKLVDQSKN</sequence>
<organism>
    <name type="scientific">Ralstonia nicotianae (strain ATCC BAA-1114 / GMI1000)</name>
    <name type="common">Ralstonia solanacearum</name>
    <dbReference type="NCBI Taxonomy" id="267608"/>
    <lineage>
        <taxon>Bacteria</taxon>
        <taxon>Pseudomonadati</taxon>
        <taxon>Pseudomonadota</taxon>
        <taxon>Betaproteobacteria</taxon>
        <taxon>Burkholderiales</taxon>
        <taxon>Burkholderiaceae</taxon>
        <taxon>Ralstonia</taxon>
        <taxon>Ralstonia solanacearum species complex</taxon>
    </lineage>
</organism>
<accession>Q8XXN8</accession>